<organism>
    <name type="scientific">Saccharomyces cerevisiae (strain ATCC 204508 / S288c)</name>
    <name type="common">Baker's yeast</name>
    <dbReference type="NCBI Taxonomy" id="559292"/>
    <lineage>
        <taxon>Eukaryota</taxon>
        <taxon>Fungi</taxon>
        <taxon>Dikarya</taxon>
        <taxon>Ascomycota</taxon>
        <taxon>Saccharomycotina</taxon>
        <taxon>Saccharomycetes</taxon>
        <taxon>Saccharomycetales</taxon>
        <taxon>Saccharomycetaceae</taxon>
        <taxon>Saccharomyces</taxon>
    </lineage>
</organism>
<protein>
    <recommendedName>
        <fullName>Phosphatidate cytidylyltransferase, mitochondrial</fullName>
        <ecNumber evidence="8">2.7.7.41</ecNumber>
    </recommendedName>
    <alternativeName>
        <fullName>CDP-diacylglycerol synthase</fullName>
        <shortName>CDP-DAG synthase</shortName>
    </alternativeName>
    <alternativeName>
        <fullName>Mitochondrial import protein MMP37</fullName>
    </alternativeName>
    <alternativeName>
        <fullName>Mitochondrial matrix protein of 37 kDa</fullName>
    </alternativeName>
    <alternativeName>
        <fullName>Mitochondrial translocator assembly and maintenance protein 41</fullName>
    </alternativeName>
</protein>
<gene>
    <name type="primary">TAM41</name>
    <name type="synonym">MMP37</name>
    <name type="ordered locus">YGR046W</name>
</gene>
<reference key="1">
    <citation type="journal article" date="2005" name="Nat. Genet.">
        <title>Quantitative trait loci mapped to single-nucleotide resolution in yeast.</title>
        <authorList>
            <person name="Deutschbauer A.M."/>
            <person name="Davis R.W."/>
        </authorList>
    </citation>
    <scope>NUCLEOTIDE SEQUENCE [GENOMIC DNA]</scope>
    <scope>VARIANTS SER-8 AND ALA-127</scope>
    <source>
        <strain>SK1</strain>
    </source>
</reference>
<reference key="2">
    <citation type="journal article" date="1997" name="Nature">
        <title>The nucleotide sequence of Saccharomyces cerevisiae chromosome VII.</title>
        <authorList>
            <person name="Tettelin H."/>
            <person name="Agostoni-Carbone M.L."/>
            <person name="Albermann K."/>
            <person name="Albers M."/>
            <person name="Arroyo J."/>
            <person name="Backes U."/>
            <person name="Barreiros T."/>
            <person name="Bertani I."/>
            <person name="Bjourson A.J."/>
            <person name="Brueckner M."/>
            <person name="Bruschi C.V."/>
            <person name="Carignani G."/>
            <person name="Castagnoli L."/>
            <person name="Cerdan E."/>
            <person name="Clemente M.L."/>
            <person name="Coblenz A."/>
            <person name="Coglievina M."/>
            <person name="Coissac E."/>
            <person name="Defoor E."/>
            <person name="Del Bino S."/>
            <person name="Delius H."/>
            <person name="Delneri D."/>
            <person name="de Wergifosse P."/>
            <person name="Dujon B."/>
            <person name="Durand P."/>
            <person name="Entian K.-D."/>
            <person name="Eraso P."/>
            <person name="Escribano V."/>
            <person name="Fabiani L."/>
            <person name="Fartmann B."/>
            <person name="Feroli F."/>
            <person name="Feuermann M."/>
            <person name="Frontali L."/>
            <person name="Garcia-Gonzalez M."/>
            <person name="Garcia-Saez M.I."/>
            <person name="Goffeau A."/>
            <person name="Guerreiro P."/>
            <person name="Hani J."/>
            <person name="Hansen M."/>
            <person name="Hebling U."/>
            <person name="Hernandez K."/>
            <person name="Heumann K."/>
            <person name="Hilger F."/>
            <person name="Hofmann B."/>
            <person name="Indge K.J."/>
            <person name="James C.M."/>
            <person name="Klima R."/>
            <person name="Koetter P."/>
            <person name="Kramer B."/>
            <person name="Kramer W."/>
            <person name="Lauquin G."/>
            <person name="Leuther H."/>
            <person name="Louis E.J."/>
            <person name="Maillier E."/>
            <person name="Marconi A."/>
            <person name="Martegani E."/>
            <person name="Mazon M.J."/>
            <person name="Mazzoni C."/>
            <person name="McReynolds A.D.K."/>
            <person name="Melchioretto P."/>
            <person name="Mewes H.-W."/>
            <person name="Minenkova O."/>
            <person name="Mueller-Auer S."/>
            <person name="Nawrocki A."/>
            <person name="Netter P."/>
            <person name="Neu R."/>
            <person name="Nombela C."/>
            <person name="Oliver S.G."/>
            <person name="Panzeri L."/>
            <person name="Paoluzi S."/>
            <person name="Plevani P."/>
            <person name="Portetelle D."/>
            <person name="Portillo F."/>
            <person name="Potier S."/>
            <person name="Purnelle B."/>
            <person name="Rieger M."/>
            <person name="Riles L."/>
            <person name="Rinaldi T."/>
            <person name="Robben J."/>
            <person name="Rodrigues-Pousada C."/>
            <person name="Rodriguez-Belmonte E."/>
            <person name="Rodriguez-Torres A.M."/>
            <person name="Rose M."/>
            <person name="Ruzzi M."/>
            <person name="Saliola M."/>
            <person name="Sanchez-Perez M."/>
            <person name="Schaefer B."/>
            <person name="Schaefer M."/>
            <person name="Scharfe M."/>
            <person name="Schmidheini T."/>
            <person name="Schreer A."/>
            <person name="Skala J."/>
            <person name="Souciet J.-L."/>
            <person name="Steensma H.Y."/>
            <person name="Talla E."/>
            <person name="Thierry A."/>
            <person name="Vandenbol M."/>
            <person name="van der Aart Q.J.M."/>
            <person name="Van Dyck L."/>
            <person name="Vanoni M."/>
            <person name="Verhasselt P."/>
            <person name="Voet M."/>
            <person name="Volckaert G."/>
            <person name="Wambutt R."/>
            <person name="Watson M.D."/>
            <person name="Weber N."/>
            <person name="Wedler E."/>
            <person name="Wedler H."/>
            <person name="Wipfli P."/>
            <person name="Wolf K."/>
            <person name="Wright L.F."/>
            <person name="Zaccaria P."/>
            <person name="Zimmermann M."/>
            <person name="Zollner A."/>
            <person name="Kleine K."/>
        </authorList>
    </citation>
    <scope>NUCLEOTIDE SEQUENCE [LARGE SCALE GENOMIC DNA]</scope>
    <source>
        <strain>ATCC 204508 / S288c</strain>
    </source>
</reference>
<reference key="3">
    <citation type="journal article" date="2014" name="G3 (Bethesda)">
        <title>The reference genome sequence of Saccharomyces cerevisiae: Then and now.</title>
        <authorList>
            <person name="Engel S.R."/>
            <person name="Dietrich F.S."/>
            <person name="Fisk D.G."/>
            <person name="Binkley G."/>
            <person name="Balakrishnan R."/>
            <person name="Costanzo M.C."/>
            <person name="Dwight S.S."/>
            <person name="Hitz B.C."/>
            <person name="Karra K."/>
            <person name="Nash R.S."/>
            <person name="Weng S."/>
            <person name="Wong E.D."/>
            <person name="Lloyd P."/>
            <person name="Skrzypek M.S."/>
            <person name="Miyasato S.R."/>
            <person name="Simison M."/>
            <person name="Cherry J.M."/>
        </authorList>
    </citation>
    <scope>GENOME REANNOTATION</scope>
    <source>
        <strain>ATCC 204508 / S288c</strain>
    </source>
</reference>
<reference key="4">
    <citation type="journal article" date="2003" name="Mol. Cell">
        <title>Assigning function to yeast proteins by integration of technologies.</title>
        <authorList>
            <person name="Hazbun T.R."/>
            <person name="Malmstroem L."/>
            <person name="Anderson S."/>
            <person name="Graczyk B.J."/>
            <person name="Fox B."/>
            <person name="Riffle M."/>
            <person name="Sundin B.A."/>
            <person name="Aranda J.D."/>
            <person name="McDonald W.H."/>
            <person name="Chiu C.-H."/>
            <person name="Snydsman B.E."/>
            <person name="Bradley P."/>
            <person name="Muller E.G.D."/>
            <person name="Fields S."/>
            <person name="Baker D."/>
            <person name="Yates J.R. III"/>
            <person name="Davis T.N."/>
        </authorList>
    </citation>
    <scope>IDENTIFICATION BY MASS SPECTROMETRY</scope>
</reference>
<reference key="5">
    <citation type="journal article" date="2003" name="Nature">
        <title>Global analysis of protein localization in budding yeast.</title>
        <authorList>
            <person name="Huh W.-K."/>
            <person name="Falvo J.V."/>
            <person name="Gerke L.C."/>
            <person name="Carroll A.S."/>
            <person name="Howson R.W."/>
            <person name="Weissman J.S."/>
            <person name="O'Shea E.K."/>
        </authorList>
    </citation>
    <scope>SUBCELLULAR LOCATION [LARGE SCALE ANALYSIS]</scope>
</reference>
<reference key="6">
    <citation type="journal article" date="2003" name="Nature">
        <title>Global analysis of protein expression in yeast.</title>
        <authorList>
            <person name="Ghaemmaghami S."/>
            <person name="Huh W.-K."/>
            <person name="Bower K."/>
            <person name="Howson R.W."/>
            <person name="Belle A."/>
            <person name="Dephoure N."/>
            <person name="O'Shea E.K."/>
            <person name="Weissman J.S."/>
        </authorList>
    </citation>
    <scope>LEVEL OF PROTEIN EXPRESSION [LARGE SCALE ANALYSIS]</scope>
</reference>
<reference key="7">
    <citation type="journal article" date="2006" name="J. Cell Biol.">
        <title>Identification of Tam41 maintaining integrity of the TIM23 protein translocator complex in mitochondria.</title>
        <authorList>
            <person name="Tamura Y."/>
            <person name="Harada Y."/>
            <person name="Yamano K."/>
            <person name="Watanabe K."/>
            <person name="Ishikawa D."/>
            <person name="Ohshima C."/>
            <person name="Nishikawa S."/>
            <person name="Yamamoto H."/>
            <person name="Endo T."/>
        </authorList>
    </citation>
    <scope>FUNCTION</scope>
    <scope>SUBCELLULAR LOCATION</scope>
</reference>
<reference key="8">
    <citation type="journal article" date="2006" name="Mol. Biol. Cell">
        <title>Characterization of Mmp37p, a Saccharomyces cerevisiae mitochondrial matrix protein with a role in mitochondrial protein import.</title>
        <authorList>
            <person name="Gallas M.R."/>
            <person name="Dienhart M.K."/>
            <person name="Stuart R.A."/>
            <person name="Long R.M."/>
        </authorList>
    </citation>
    <scope>FUNCTION</scope>
    <scope>SUBCELLULAR LOCATION</scope>
</reference>
<reference key="9">
    <citation type="journal article" date="2008" name="J. Cell Biol.">
        <title>The translocator maintenance protein Tam41 is required for mitochondrial cardiolipin biosynthesis.</title>
        <authorList>
            <person name="Kutik S."/>
            <person name="Rissler M."/>
            <person name="Guan X.L."/>
            <person name="Guiard B."/>
            <person name="Shui G."/>
            <person name="Gebert N."/>
            <person name="Heacock P.N."/>
            <person name="Rehling P."/>
            <person name="Dowhan W."/>
            <person name="Wenk M.R."/>
            <person name="Pfanner N."/>
            <person name="Wiedemann N."/>
        </authorList>
    </citation>
    <scope>FUNCTION</scope>
    <scope>PATHWAY</scope>
    <scope>DISRUPTION PHENOTYPE</scope>
</reference>
<reference key="10">
    <citation type="journal article" date="2010" name="EMBO J.">
        <title>A mitochondrial phosphatase required for cardiolipin biosynthesis: the PGP phosphatase Gep4.</title>
        <authorList>
            <person name="Osman C."/>
            <person name="Haag M."/>
            <person name="Wieland F.T."/>
            <person name="Brugger B."/>
            <person name="Langer T."/>
        </authorList>
    </citation>
    <scope>PATHWAY</scope>
</reference>
<reference key="11">
    <citation type="journal article" date="2013" name="Cell Metab.">
        <title>Tam41 is a CDP-diacylglycerol synthase required for cardiolipin biosynthesis in mitochondria.</title>
        <authorList>
            <person name="Tamura Y."/>
            <person name="Harada Y."/>
            <person name="Nishikawa S."/>
            <person name="Yamano K."/>
            <person name="Kamiya M."/>
            <person name="Shiota T."/>
            <person name="Kuroda T."/>
            <person name="Kuge O."/>
            <person name="Sesaki H."/>
            <person name="Imai K."/>
            <person name="Tomii K."/>
            <person name="Endo T."/>
        </authorList>
    </citation>
    <scope>FUNCTION</scope>
    <scope>CATALYTIC ACTIVITY</scope>
    <scope>BIOPHYSICOCHEMICAL PROPERTIES</scope>
    <scope>SUBCELLULAR LOCATION</scope>
    <scope>COFACTOR</scope>
    <scope>MUTAGENESIS OF 130-TYR--SER-132 AND ASP-220</scope>
</reference>
<proteinExistence type="evidence at protein level"/>
<keyword id="KW-0444">Lipid biosynthesis</keyword>
<keyword id="KW-0443">Lipid metabolism</keyword>
<keyword id="KW-0460">Magnesium</keyword>
<keyword id="KW-0472">Membrane</keyword>
<keyword id="KW-0496">Mitochondrion</keyword>
<keyword id="KW-0999">Mitochondrion inner membrane</keyword>
<keyword id="KW-0548">Nucleotidyltransferase</keyword>
<keyword id="KW-0594">Phospholipid biosynthesis</keyword>
<keyword id="KW-1208">Phospholipid metabolism</keyword>
<keyword id="KW-1185">Reference proteome</keyword>
<keyword id="KW-0808">Transferase</keyword>
<dbReference type="EC" id="2.7.7.41" evidence="8"/>
<dbReference type="EMBL" id="DQ115391">
    <property type="protein sequence ID" value="AAZ22461.1"/>
    <property type="molecule type" value="Genomic_DNA"/>
</dbReference>
<dbReference type="EMBL" id="Z72831">
    <property type="protein sequence ID" value="CAA97045.1"/>
    <property type="molecule type" value="Genomic_DNA"/>
</dbReference>
<dbReference type="EMBL" id="BK006941">
    <property type="protein sequence ID" value="DAA08144.1"/>
    <property type="molecule type" value="Genomic_DNA"/>
</dbReference>
<dbReference type="PIR" id="S64340">
    <property type="entry name" value="S64340"/>
</dbReference>
<dbReference type="RefSeq" id="NP_011560.3">
    <property type="nucleotide sequence ID" value="NM_001181175.3"/>
</dbReference>
<dbReference type="SMR" id="P53230"/>
<dbReference type="BioGRID" id="33293">
    <property type="interactions" value="155"/>
</dbReference>
<dbReference type="DIP" id="DIP-1622N"/>
<dbReference type="FunCoup" id="P53230">
    <property type="interactions" value="409"/>
</dbReference>
<dbReference type="IntAct" id="P53230">
    <property type="interactions" value="28"/>
</dbReference>
<dbReference type="MINT" id="P53230"/>
<dbReference type="STRING" id="4932.YGR046W"/>
<dbReference type="SwissLipids" id="SLP:000000240"/>
<dbReference type="PaxDb" id="4932-YGR046W"/>
<dbReference type="PeptideAtlas" id="P53230"/>
<dbReference type="EnsemblFungi" id="YGR046W_mRNA">
    <property type="protein sequence ID" value="YGR046W"/>
    <property type="gene ID" value="YGR046W"/>
</dbReference>
<dbReference type="GeneID" id="852937"/>
<dbReference type="KEGG" id="sce:YGR046W"/>
<dbReference type="AGR" id="SGD:S000003278"/>
<dbReference type="SGD" id="S000003278">
    <property type="gene designation" value="TAM41"/>
</dbReference>
<dbReference type="VEuPathDB" id="FungiDB:YGR046W"/>
<dbReference type="eggNOG" id="KOG2986">
    <property type="taxonomic scope" value="Eukaryota"/>
</dbReference>
<dbReference type="GeneTree" id="ENSGT00390000000616"/>
<dbReference type="HOGENOM" id="CLU_030279_2_0_1"/>
<dbReference type="InParanoid" id="P53230"/>
<dbReference type="OMA" id="LNMRQNP"/>
<dbReference type="OrthoDB" id="341477at2759"/>
<dbReference type="BioCyc" id="YEAST:G3O-30764-MONOMER"/>
<dbReference type="BRENDA" id="2.7.7.41">
    <property type="organism ID" value="984"/>
</dbReference>
<dbReference type="UniPathway" id="UPA00557">
    <property type="reaction ID" value="UER00614"/>
</dbReference>
<dbReference type="BioGRID-ORCS" id="852937">
    <property type="hits" value="4 hits in 10 CRISPR screens"/>
</dbReference>
<dbReference type="PRO" id="PR:P53230"/>
<dbReference type="Proteomes" id="UP000002311">
    <property type="component" value="Chromosome VII"/>
</dbReference>
<dbReference type="RNAct" id="P53230">
    <property type="molecule type" value="protein"/>
</dbReference>
<dbReference type="GO" id="GO:0005743">
    <property type="term" value="C:mitochondrial inner membrane"/>
    <property type="evidence" value="ECO:0007669"/>
    <property type="project" value="UniProtKB-SubCell"/>
</dbReference>
<dbReference type="GO" id="GO:0005759">
    <property type="term" value="C:mitochondrial matrix"/>
    <property type="evidence" value="ECO:0000314"/>
    <property type="project" value="SGD"/>
</dbReference>
<dbReference type="GO" id="GO:0005739">
    <property type="term" value="C:mitochondrion"/>
    <property type="evidence" value="ECO:0007005"/>
    <property type="project" value="SGD"/>
</dbReference>
<dbReference type="GO" id="GO:0004605">
    <property type="term" value="F:phosphatidate cytidylyltransferase activity"/>
    <property type="evidence" value="ECO:0000314"/>
    <property type="project" value="SGD"/>
</dbReference>
<dbReference type="GO" id="GO:0032049">
    <property type="term" value="P:cardiolipin biosynthetic process"/>
    <property type="evidence" value="ECO:0000315"/>
    <property type="project" value="SGD"/>
</dbReference>
<dbReference type="GO" id="GO:0016024">
    <property type="term" value="P:CDP-diacylglycerol biosynthetic process"/>
    <property type="evidence" value="ECO:0000318"/>
    <property type="project" value="GO_Central"/>
</dbReference>
<dbReference type="InterPro" id="IPR015222">
    <property type="entry name" value="Tam41"/>
</dbReference>
<dbReference type="PANTHER" id="PTHR13619">
    <property type="entry name" value="PHOSPHATIDATE CYTIDYLYLTRANSFERASE, MITOCHONDRIAL"/>
    <property type="match status" value="1"/>
</dbReference>
<dbReference type="PANTHER" id="PTHR13619:SF0">
    <property type="entry name" value="PHOSPHATIDATE CYTIDYLYLTRANSFERASE, MITOCHONDRIAL"/>
    <property type="match status" value="1"/>
</dbReference>
<dbReference type="Pfam" id="PF09139">
    <property type="entry name" value="Tam41_Mmp37"/>
    <property type="match status" value="2"/>
</dbReference>
<dbReference type="PIRSF" id="PIRSF028840">
    <property type="entry name" value="Mmp37"/>
    <property type="match status" value="1"/>
</dbReference>
<feature type="chain" id="PRO_0000202796" description="Phosphatidate cytidylyltransferase, mitochondrial">
    <location>
        <begin position="1"/>
        <end position="385"/>
    </location>
</feature>
<feature type="sequence variant" description="In strain: SK1." evidence="3">
    <original>G</original>
    <variation>S</variation>
    <location>
        <position position="8"/>
    </location>
</feature>
<feature type="sequence variant" description="In strain: SK1." evidence="3">
    <original>V</original>
    <variation>A</variation>
    <location>
        <position position="127"/>
    </location>
</feature>
<feature type="mutagenesis site" description="Completely abolishes the enzymatic activity." evidence="8">
    <original>YGS</original>
    <variation>AAA</variation>
    <location>
        <begin position="130"/>
        <end position="132"/>
    </location>
</feature>
<feature type="mutagenesis site" description="Completely abolishes the enzymatic activity." evidence="8">
    <original>D</original>
    <variation>A</variation>
    <location>
        <position position="220"/>
    </location>
</feature>
<name>TAM41_YEAST</name>
<comment type="function">
    <text evidence="4 5 6 8">Catalyzes the formation of CDP-diacylglycerol (CDP-DAG) from phosphatidic acid (PA) in the mitochondrial inner membrane. Required for the biosynthesis of the dimeric phospholipid cardiolipin, which stabilizes supercomplexes of the mitochondrial respiratory chain in the mitochondrial inner membrane.</text>
</comment>
<comment type="catalytic activity">
    <reaction evidence="8">
        <text>a 1,2-diacyl-sn-glycero-3-phosphate + CTP + H(+) = a CDP-1,2-diacyl-sn-glycerol + diphosphate</text>
        <dbReference type="Rhea" id="RHEA:16229"/>
        <dbReference type="ChEBI" id="CHEBI:15378"/>
        <dbReference type="ChEBI" id="CHEBI:33019"/>
        <dbReference type="ChEBI" id="CHEBI:37563"/>
        <dbReference type="ChEBI" id="CHEBI:58332"/>
        <dbReference type="ChEBI" id="CHEBI:58608"/>
        <dbReference type="EC" id="2.7.7.41"/>
    </reaction>
    <physiologicalReaction direction="left-to-right" evidence="13">
        <dbReference type="Rhea" id="RHEA:16230"/>
    </physiologicalReaction>
</comment>
<comment type="cofactor">
    <cofactor evidence="8">
        <name>Mg(2+)</name>
        <dbReference type="ChEBI" id="CHEBI:18420"/>
    </cofactor>
    <cofactor evidence="8">
        <name>Co(2+)</name>
        <dbReference type="ChEBI" id="CHEBI:48828"/>
    </cofactor>
    <cofactor evidence="8">
        <name>Cu(2+)</name>
        <dbReference type="ChEBI" id="CHEBI:29036"/>
    </cofactor>
    <text evidence="8">Magnesium. Also active with cobalt or copper.</text>
</comment>
<comment type="biophysicochemical properties">
    <kinetics>
        <KM evidence="8">0.76 mM for CTP</KM>
        <KM evidence="8">0.067 mM for nitrobenzoxadiazole-phosphatidate</KM>
        <Vmax evidence="8">68.0 nmol/min/mg enzyme</Vmax>
    </kinetics>
    <phDependence>
        <text evidence="8">Optimum pH is 7-9.</text>
    </phDependence>
</comment>
<comment type="pathway">
    <text evidence="6 7">Phospholipid metabolism; CDP-diacylglycerol biosynthesis; CDP-diacylglycerol from sn-glycerol 3-phosphate: step 3/3.</text>
</comment>
<comment type="subcellular location">
    <subcellularLocation>
        <location evidence="1 4 5 8">Mitochondrion inner membrane</location>
        <topology evidence="1 4 5 8">Peripheral membrane protein</topology>
        <orientation evidence="1 4 5 8">Matrix side</orientation>
    </subcellularLocation>
</comment>
<comment type="disruption phenotype">
    <text evidence="6">Deficient in cardiolipin. Blocked in the import of presequence-containing proteins as well as of non-cleavable carrier proteins into mitochondria.</text>
</comment>
<comment type="miscellaneous">
    <text evidence="2">Present with 195 molecules/cell in log phase SD medium.</text>
</comment>
<comment type="similarity">
    <text evidence="9">Belongs to the TAM41 family.</text>
</comment>
<comment type="caution">
    <text evidence="10 11 12">Was initially identified as protein involved in the translocation of transit peptide-containing proteins across the mitochondrial inner membrane by its role in maintaining the integrity and stability of the inner membrane translocase TIM23 complex (PubMed:16790493, PubMed:16943180). It has later been shown that this phenotype can be attributed to the pleiotropic effects of mitochondria lacking cardiolipin (PubMed:19114592).</text>
</comment>
<evidence type="ECO:0000269" key="1">
    <source>
    </source>
</evidence>
<evidence type="ECO:0000269" key="2">
    <source>
    </source>
</evidence>
<evidence type="ECO:0000269" key="3">
    <source>
    </source>
</evidence>
<evidence type="ECO:0000269" key="4">
    <source>
    </source>
</evidence>
<evidence type="ECO:0000269" key="5">
    <source>
    </source>
</evidence>
<evidence type="ECO:0000269" key="6">
    <source>
    </source>
</evidence>
<evidence type="ECO:0000269" key="7">
    <source>
    </source>
</evidence>
<evidence type="ECO:0000269" key="8">
    <source>
    </source>
</evidence>
<evidence type="ECO:0000305" key="9"/>
<evidence type="ECO:0000305" key="10">
    <source>
    </source>
</evidence>
<evidence type="ECO:0000305" key="11">
    <source>
    </source>
</evidence>
<evidence type="ECO:0000305" key="12">
    <source>
    </source>
</evidence>
<evidence type="ECO:0000305" key="13">
    <source>
    </source>
</evidence>
<sequence>MLRVSENGLRFLLKCHSTNVSMFNRLLSTQIKEGRSSIDDAGIIPDGTINERPNHYIEGITKGSDLDLLEKGIRKTDEMTSNFTNYMYKFHRLPPNYGSNQLITIDKELQKELDGVMSSFKAPCRFVFGYGSGVFEQAGYSKSHSKPQIDIILGVTYPSHFHSINMRQNPQHYSSLKYFGSEFVSKFQQIGAGVYFNPFANINGHDVKYGVVSMETLLKDIATWNTFYLAGRLQKPVKILKNDLRVQYWNQLNLKAAATLAKHYTLEKNNNKFDEFQFYKEITALSYAGDIRYKLGGENPDKVNNIVTKNFERFQEYYKPIYKEVVLNDSFYLPKGFTLKNTQRLLLSRISKSSALQTIKGVFTAGITKSIKYAWAKKLKSMRRS</sequence>
<accession>P53230</accession>
<accession>D6VUI3</accession>
<accession>Q45U38</accession>